<protein>
    <recommendedName>
        <fullName>Uncharacterized protein E-96</fullName>
    </recommendedName>
</protein>
<comment type="function">
    <text evidence="1">Essential for virus function.</text>
</comment>
<organismHost>
    <name type="scientific">Saccharolobus solfataricus</name>
    <name type="common">Sulfolobus solfataricus</name>
    <dbReference type="NCBI Taxonomy" id="2287"/>
</organismHost>
<sequence length="96" mass="11176">MMVQVPIFDLLKLLDVLGIDSISFRVLNEYDEGFIRVDYLEEALQKDGWSKVYNESEDPNYCCGNFDVEYANNGYKIILRCDEDGYVFQITINKVT</sequence>
<dbReference type="EMBL" id="X07234">
    <property type="protein sequence ID" value="CAA30218.1"/>
    <property type="molecule type" value="Genomic_DNA"/>
</dbReference>
<dbReference type="PIR" id="S03219">
    <property type="entry name" value="S03219"/>
</dbReference>
<dbReference type="RefSeq" id="NP_039785.1">
    <property type="nucleotide sequence ID" value="NC_001338.1"/>
</dbReference>
<dbReference type="KEGG" id="vg:2559636"/>
<dbReference type="Proteomes" id="UP000000854">
    <property type="component" value="Genome"/>
</dbReference>
<name>E96_SSV1</name>
<gene>
    <name type="ORF">e96</name>
</gene>
<evidence type="ECO:0000269" key="1">
    <source>
    </source>
</evidence>
<reference key="1">
    <citation type="journal article" date="1991" name="Virology">
        <title>Complete nucleotide sequence of the virus SSV1 of the archaebacterium Sulfolobus shibatae.</title>
        <authorList>
            <person name="Palm P."/>
            <person name="Schleper C."/>
            <person name="Grampp B."/>
            <person name="Yeats S."/>
            <person name="McWilliam P."/>
            <person name="Reiter W.-D."/>
            <person name="Zillig W."/>
        </authorList>
    </citation>
    <scope>NUCLEOTIDE SEQUENCE [GENOMIC DNA]</scope>
</reference>
<reference key="2">
    <citation type="journal article" date="1999" name="Genetics">
        <title>Genetic requirements for the function of the archaeal virus SSV1 in Sulfolobus solfataricus: construction and testing of viral shuttle vectors.</title>
        <authorList>
            <person name="Stedman K.M."/>
            <person name="Schleper C."/>
            <person name="Rumpf E."/>
            <person name="Zillig W."/>
        </authorList>
    </citation>
    <scope>FUNCTION</scope>
</reference>
<feature type="chain" id="PRO_0000223015" description="Uncharacterized protein E-96">
    <location>
        <begin position="1"/>
        <end position="96"/>
    </location>
</feature>
<proteinExistence type="predicted"/>
<organism>
    <name type="scientific">Sulfolobus spindle-shape virus 1</name>
    <name type="common">SSV1</name>
    <dbReference type="NCBI Taxonomy" id="244589"/>
    <lineage>
        <taxon>Viruses</taxon>
        <taxon>Viruses incertae sedis</taxon>
        <taxon>Fuselloviridae</taxon>
        <taxon>Alphafusellovirus</taxon>
    </lineage>
</organism>
<keyword id="KW-1185">Reference proteome</keyword>
<accession>P20219</accession>